<comment type="function">
    <text evidence="1">Modulates RecA activity.</text>
</comment>
<comment type="subcellular location">
    <subcellularLocation>
        <location evidence="1">Cytoplasm</location>
    </subcellularLocation>
</comment>
<comment type="similarity">
    <text evidence="1">Belongs to the RecX family.</text>
</comment>
<proteinExistence type="inferred from homology"/>
<organism>
    <name type="scientific">Escherichia coli O8 (strain IAI1)</name>
    <dbReference type="NCBI Taxonomy" id="585034"/>
    <lineage>
        <taxon>Bacteria</taxon>
        <taxon>Pseudomonadati</taxon>
        <taxon>Pseudomonadota</taxon>
        <taxon>Gammaproteobacteria</taxon>
        <taxon>Enterobacterales</taxon>
        <taxon>Enterobacteriaceae</taxon>
        <taxon>Escherichia</taxon>
    </lineage>
</organism>
<name>RECX_ECO8A</name>
<protein>
    <recommendedName>
        <fullName evidence="1">Regulatory protein RecX</fullName>
    </recommendedName>
</protein>
<feature type="chain" id="PRO_1000137163" description="Regulatory protein RecX">
    <location>
        <begin position="1"/>
        <end position="166"/>
    </location>
</feature>
<reference key="1">
    <citation type="journal article" date="2009" name="PLoS Genet.">
        <title>Organised genome dynamics in the Escherichia coli species results in highly diverse adaptive paths.</title>
        <authorList>
            <person name="Touchon M."/>
            <person name="Hoede C."/>
            <person name="Tenaillon O."/>
            <person name="Barbe V."/>
            <person name="Baeriswyl S."/>
            <person name="Bidet P."/>
            <person name="Bingen E."/>
            <person name="Bonacorsi S."/>
            <person name="Bouchier C."/>
            <person name="Bouvet O."/>
            <person name="Calteau A."/>
            <person name="Chiapello H."/>
            <person name="Clermont O."/>
            <person name="Cruveiller S."/>
            <person name="Danchin A."/>
            <person name="Diard M."/>
            <person name="Dossat C."/>
            <person name="Karoui M.E."/>
            <person name="Frapy E."/>
            <person name="Garry L."/>
            <person name="Ghigo J.M."/>
            <person name="Gilles A.M."/>
            <person name="Johnson J."/>
            <person name="Le Bouguenec C."/>
            <person name="Lescat M."/>
            <person name="Mangenot S."/>
            <person name="Martinez-Jehanne V."/>
            <person name="Matic I."/>
            <person name="Nassif X."/>
            <person name="Oztas S."/>
            <person name="Petit M.A."/>
            <person name="Pichon C."/>
            <person name="Rouy Z."/>
            <person name="Ruf C.S."/>
            <person name="Schneider D."/>
            <person name="Tourret J."/>
            <person name="Vacherie B."/>
            <person name="Vallenet D."/>
            <person name="Medigue C."/>
            <person name="Rocha E.P.C."/>
            <person name="Denamur E."/>
        </authorList>
    </citation>
    <scope>NUCLEOTIDE SEQUENCE [LARGE SCALE GENOMIC DNA]</scope>
    <source>
        <strain>IAI1</strain>
    </source>
</reference>
<gene>
    <name evidence="1" type="primary">recX</name>
    <name type="ordered locus">ECIAI1_2790</name>
</gene>
<dbReference type="EMBL" id="CU928160">
    <property type="protein sequence ID" value="CAQ99615.1"/>
    <property type="molecule type" value="Genomic_DNA"/>
</dbReference>
<dbReference type="RefSeq" id="WP_000140506.1">
    <property type="nucleotide sequence ID" value="NC_011741.1"/>
</dbReference>
<dbReference type="SMR" id="B7M9D5"/>
<dbReference type="GeneID" id="75172780"/>
<dbReference type="KEGG" id="ecr:ECIAI1_2790"/>
<dbReference type="HOGENOM" id="CLU_066607_3_2_6"/>
<dbReference type="GO" id="GO:0005737">
    <property type="term" value="C:cytoplasm"/>
    <property type="evidence" value="ECO:0007669"/>
    <property type="project" value="UniProtKB-SubCell"/>
</dbReference>
<dbReference type="GO" id="GO:0006282">
    <property type="term" value="P:regulation of DNA repair"/>
    <property type="evidence" value="ECO:0007669"/>
    <property type="project" value="UniProtKB-UniRule"/>
</dbReference>
<dbReference type="FunFam" id="1.10.10.10:FF:000133">
    <property type="entry name" value="Regulatory protein RecX"/>
    <property type="match status" value="1"/>
</dbReference>
<dbReference type="FunFam" id="1.10.10.10:FF:000134">
    <property type="entry name" value="Regulatory protein RecX"/>
    <property type="match status" value="1"/>
</dbReference>
<dbReference type="FunFam" id="1.10.10.10:FF:000209">
    <property type="entry name" value="Regulatory protein RecX"/>
    <property type="match status" value="1"/>
</dbReference>
<dbReference type="Gene3D" id="1.10.10.10">
    <property type="entry name" value="Winged helix-like DNA-binding domain superfamily/Winged helix DNA-binding domain"/>
    <property type="match status" value="3"/>
</dbReference>
<dbReference type="HAMAP" id="MF_01114">
    <property type="entry name" value="RecX"/>
    <property type="match status" value="1"/>
</dbReference>
<dbReference type="InterPro" id="IPR053926">
    <property type="entry name" value="RecX_HTH_1st"/>
</dbReference>
<dbReference type="InterPro" id="IPR053924">
    <property type="entry name" value="RecX_HTH_2nd"/>
</dbReference>
<dbReference type="InterPro" id="IPR053925">
    <property type="entry name" value="RecX_HTH_3rd"/>
</dbReference>
<dbReference type="InterPro" id="IPR003783">
    <property type="entry name" value="Regulatory_RecX"/>
</dbReference>
<dbReference type="InterPro" id="IPR036388">
    <property type="entry name" value="WH-like_DNA-bd_sf"/>
</dbReference>
<dbReference type="NCBIfam" id="NF001052">
    <property type="entry name" value="PRK00117.1-1"/>
    <property type="match status" value="1"/>
</dbReference>
<dbReference type="PANTHER" id="PTHR33602">
    <property type="entry name" value="REGULATORY PROTEIN RECX FAMILY PROTEIN"/>
    <property type="match status" value="1"/>
</dbReference>
<dbReference type="PANTHER" id="PTHR33602:SF1">
    <property type="entry name" value="REGULATORY PROTEIN RECX FAMILY PROTEIN"/>
    <property type="match status" value="1"/>
</dbReference>
<dbReference type="Pfam" id="PF21982">
    <property type="entry name" value="RecX_HTH1"/>
    <property type="match status" value="1"/>
</dbReference>
<dbReference type="Pfam" id="PF02631">
    <property type="entry name" value="RecX_HTH2"/>
    <property type="match status" value="1"/>
</dbReference>
<dbReference type="Pfam" id="PF21981">
    <property type="entry name" value="RecX_HTH3"/>
    <property type="match status" value="1"/>
</dbReference>
<sequence length="166" mass="19410">MTESTSRRPAYARLLDRAVRILAVRDHSEQELRRKLAAPIMGKNGPEEIDATAEDYERVIAWCHEHGYLDDSRFVARFIASRSRKGYGPARIRQELNQKGISREATEKAMRECDIDWCALARDQATRKYGEPLPTVFSEKVKIQRFLLYRGYLMEDIQDIWRNFAD</sequence>
<keyword id="KW-0963">Cytoplasm</keyword>
<evidence type="ECO:0000255" key="1">
    <source>
        <dbReference type="HAMAP-Rule" id="MF_01114"/>
    </source>
</evidence>
<accession>B7M9D5</accession>